<organism>
    <name type="scientific">Danio rerio</name>
    <name type="common">Zebrafish</name>
    <name type="synonym">Brachydanio rerio</name>
    <dbReference type="NCBI Taxonomy" id="7955"/>
    <lineage>
        <taxon>Eukaryota</taxon>
        <taxon>Metazoa</taxon>
        <taxon>Chordata</taxon>
        <taxon>Craniata</taxon>
        <taxon>Vertebrata</taxon>
        <taxon>Euteleostomi</taxon>
        <taxon>Actinopterygii</taxon>
        <taxon>Neopterygii</taxon>
        <taxon>Teleostei</taxon>
        <taxon>Ostariophysi</taxon>
        <taxon>Cypriniformes</taxon>
        <taxon>Danionidae</taxon>
        <taxon>Danioninae</taxon>
        <taxon>Danio</taxon>
    </lineage>
</organism>
<dbReference type="EMBL" id="AY618926">
    <property type="protein sequence ID" value="AAT39122.1"/>
    <property type="molecule type" value="mRNA"/>
</dbReference>
<dbReference type="EMBL" id="DQ175629">
    <property type="protein sequence ID" value="ABA60692.1"/>
    <property type="molecule type" value="mRNA"/>
</dbReference>
<dbReference type="EMBL" id="CR788312">
    <property type="status" value="NOT_ANNOTATED_CDS"/>
    <property type="molecule type" value="Genomic_DNA"/>
</dbReference>
<dbReference type="RefSeq" id="NP_001002310.1">
    <property type="nucleotide sequence ID" value="NM_001002310.1"/>
</dbReference>
<dbReference type="RefSeq" id="XP_009292468.1">
    <property type="nucleotide sequence ID" value="XM_009294193.4"/>
</dbReference>
<dbReference type="SMR" id="Q6IVV8"/>
<dbReference type="FunCoup" id="Q6IVV8">
    <property type="interactions" value="458"/>
</dbReference>
<dbReference type="STRING" id="7955.ENSDARP00000027024"/>
<dbReference type="GlyCosmos" id="Q6IVV8">
    <property type="glycosylation" value="5 sites, No reported glycans"/>
</dbReference>
<dbReference type="PaxDb" id="7955-ENSDARP00000027024"/>
<dbReference type="Ensembl" id="ENSDART00000020412">
    <property type="protein sequence ID" value="ENSDARP00000027024"/>
    <property type="gene ID" value="ENSDARG00000014098"/>
</dbReference>
<dbReference type="GeneID" id="432387"/>
<dbReference type="KEGG" id="dre:432387"/>
<dbReference type="AGR" id="ZFIN:ZDB-GENE-040827-4"/>
<dbReference type="CTD" id="5311"/>
<dbReference type="ZFIN" id="ZDB-GENE-040827-4">
    <property type="gene designation" value="pkd2"/>
</dbReference>
<dbReference type="eggNOG" id="KOG3599">
    <property type="taxonomic scope" value="Eukaryota"/>
</dbReference>
<dbReference type="HOGENOM" id="CLU_012097_0_0_1"/>
<dbReference type="InParanoid" id="Q6IVV8"/>
<dbReference type="OMA" id="RHEHRSC"/>
<dbReference type="OrthoDB" id="444119at2759"/>
<dbReference type="PhylomeDB" id="Q6IVV8"/>
<dbReference type="TreeFam" id="TF316484"/>
<dbReference type="Reactome" id="R-DRE-5620916">
    <property type="pathway name" value="VxPx cargo-targeting to cilium"/>
</dbReference>
<dbReference type="PRO" id="PR:Q6IVV8"/>
<dbReference type="Proteomes" id="UP000000437">
    <property type="component" value="Chromosome 1"/>
</dbReference>
<dbReference type="Bgee" id="ENSDARG00000014098">
    <property type="expression patterns" value="Expressed in Kupffer's vesicle and 39 other cell types or tissues"/>
</dbReference>
<dbReference type="GO" id="GO:0016324">
    <property type="term" value="C:apical plasma membrane"/>
    <property type="evidence" value="ECO:0007669"/>
    <property type="project" value="UniProtKB-SubCell"/>
</dbReference>
<dbReference type="GO" id="GO:0016323">
    <property type="term" value="C:basolateral plasma membrane"/>
    <property type="evidence" value="ECO:0000314"/>
    <property type="project" value="ZFIN"/>
</dbReference>
<dbReference type="GO" id="GO:0034703">
    <property type="term" value="C:cation channel complex"/>
    <property type="evidence" value="ECO:0000250"/>
    <property type="project" value="UniProtKB"/>
</dbReference>
<dbReference type="GO" id="GO:0005929">
    <property type="term" value="C:cilium"/>
    <property type="evidence" value="ECO:0000314"/>
    <property type="project" value="ZFIN"/>
</dbReference>
<dbReference type="GO" id="GO:0030659">
    <property type="term" value="C:cytoplasmic vesicle membrane"/>
    <property type="evidence" value="ECO:0007669"/>
    <property type="project" value="UniProtKB-SubCell"/>
</dbReference>
<dbReference type="GO" id="GO:0005856">
    <property type="term" value="C:cytoskeleton"/>
    <property type="evidence" value="ECO:0007669"/>
    <property type="project" value="UniProtKB-KW"/>
</dbReference>
<dbReference type="GO" id="GO:0005783">
    <property type="term" value="C:endoplasmic reticulum"/>
    <property type="evidence" value="ECO:0000314"/>
    <property type="project" value="ZFIN"/>
</dbReference>
<dbReference type="GO" id="GO:0016328">
    <property type="term" value="C:lateral plasma membrane"/>
    <property type="evidence" value="ECO:0000250"/>
    <property type="project" value="ZFIN"/>
</dbReference>
<dbReference type="GO" id="GO:0016020">
    <property type="term" value="C:membrane"/>
    <property type="evidence" value="ECO:0000318"/>
    <property type="project" value="GO_Central"/>
</dbReference>
<dbReference type="GO" id="GO:0005886">
    <property type="term" value="C:plasma membrane"/>
    <property type="evidence" value="ECO:0000250"/>
    <property type="project" value="UniProtKB"/>
</dbReference>
<dbReference type="GO" id="GO:0042383">
    <property type="term" value="C:sarcolemma"/>
    <property type="evidence" value="ECO:0007669"/>
    <property type="project" value="UniProtKB-SubCell"/>
</dbReference>
<dbReference type="GO" id="GO:0030017">
    <property type="term" value="C:sarcomere"/>
    <property type="evidence" value="ECO:0007669"/>
    <property type="project" value="UniProtKB-SubCell"/>
</dbReference>
<dbReference type="GO" id="GO:0033017">
    <property type="term" value="C:sarcoplasmic reticulum membrane"/>
    <property type="evidence" value="ECO:0007669"/>
    <property type="project" value="UniProtKB-SubCell"/>
</dbReference>
<dbReference type="GO" id="GO:0005262">
    <property type="term" value="F:calcium channel activity"/>
    <property type="evidence" value="ECO:0000250"/>
    <property type="project" value="UniProtKB"/>
</dbReference>
<dbReference type="GO" id="GO:0005509">
    <property type="term" value="F:calcium ion binding"/>
    <property type="evidence" value="ECO:0000318"/>
    <property type="project" value="GO_Central"/>
</dbReference>
<dbReference type="GO" id="GO:0005261">
    <property type="term" value="F:monoatomic cation channel activity"/>
    <property type="evidence" value="ECO:0000250"/>
    <property type="project" value="UniProtKB"/>
</dbReference>
<dbReference type="GO" id="GO:0051371">
    <property type="term" value="F:muscle alpha-actinin binding"/>
    <property type="evidence" value="ECO:0000318"/>
    <property type="project" value="GO_Central"/>
</dbReference>
<dbReference type="GO" id="GO:0015271">
    <property type="term" value="F:outward rectifier potassium channel activity"/>
    <property type="evidence" value="ECO:0000250"/>
    <property type="project" value="UniProtKB"/>
</dbReference>
<dbReference type="GO" id="GO:0005267">
    <property type="term" value="F:potassium channel activity"/>
    <property type="evidence" value="ECO:0000318"/>
    <property type="project" value="GO_Central"/>
</dbReference>
<dbReference type="GO" id="GO:0005102">
    <property type="term" value="F:signaling receptor binding"/>
    <property type="evidence" value="ECO:0000318"/>
    <property type="project" value="GO_Central"/>
</dbReference>
<dbReference type="GO" id="GO:0005245">
    <property type="term" value="F:voltage-gated calcium channel activity"/>
    <property type="evidence" value="ECO:0000318"/>
    <property type="project" value="GO_Central"/>
</dbReference>
<dbReference type="GO" id="GO:0005248">
    <property type="term" value="F:voltage-gated sodium channel activity"/>
    <property type="evidence" value="ECO:0000318"/>
    <property type="project" value="GO_Central"/>
</dbReference>
<dbReference type="GO" id="GO:0003171">
    <property type="term" value="P:atrioventricular valve development"/>
    <property type="evidence" value="ECO:0000315"/>
    <property type="project" value="ZFIN"/>
</dbReference>
<dbReference type="GO" id="GO:0070588">
    <property type="term" value="P:calcium ion transmembrane transport"/>
    <property type="evidence" value="ECO:0000250"/>
    <property type="project" value="UniProtKB"/>
</dbReference>
<dbReference type="GO" id="GO:0007166">
    <property type="term" value="P:cell surface receptor signaling pathway"/>
    <property type="evidence" value="ECO:0000250"/>
    <property type="project" value="UniProtKB"/>
</dbReference>
<dbReference type="GO" id="GO:0071277">
    <property type="term" value="P:cellular response to calcium ion"/>
    <property type="evidence" value="ECO:0000250"/>
    <property type="project" value="UniProtKB"/>
</dbReference>
<dbReference type="GO" id="GO:0097704">
    <property type="term" value="P:cellular response to oscillatory fluid shear stress"/>
    <property type="evidence" value="ECO:0000315"/>
    <property type="project" value="ZFIN"/>
</dbReference>
<dbReference type="GO" id="GO:0060271">
    <property type="term" value="P:cilium assembly"/>
    <property type="evidence" value="ECO:0000315"/>
    <property type="project" value="ZFIN"/>
</dbReference>
<dbReference type="GO" id="GO:0050982">
    <property type="term" value="P:detection of mechanical stimulus"/>
    <property type="evidence" value="ECO:0000318"/>
    <property type="project" value="GO_Central"/>
</dbReference>
<dbReference type="GO" id="GO:0061371">
    <property type="term" value="P:determination of heart left/right asymmetry"/>
    <property type="evidence" value="ECO:0000315"/>
    <property type="project" value="ZFIN"/>
</dbReference>
<dbReference type="GO" id="GO:0007368">
    <property type="term" value="P:determination of left/right symmetry"/>
    <property type="evidence" value="ECO:0000315"/>
    <property type="project" value="ZFIN"/>
</dbReference>
<dbReference type="GO" id="GO:0009953">
    <property type="term" value="P:dorsal/ventral pattern formation"/>
    <property type="evidence" value="ECO:0000315"/>
    <property type="project" value="ZFIN"/>
</dbReference>
<dbReference type="GO" id="GO:0003143">
    <property type="term" value="P:embryonic heart tube morphogenesis"/>
    <property type="evidence" value="ECO:0000315"/>
    <property type="project" value="ZFIN"/>
</dbReference>
<dbReference type="GO" id="GO:0007507">
    <property type="term" value="P:heart development"/>
    <property type="evidence" value="ECO:0000315"/>
    <property type="project" value="CACAO"/>
</dbReference>
<dbReference type="GO" id="GO:0003146">
    <property type="term" value="P:heart jogging"/>
    <property type="evidence" value="ECO:0000315"/>
    <property type="project" value="ZFIN"/>
</dbReference>
<dbReference type="GO" id="GO:0001947">
    <property type="term" value="P:heart looping"/>
    <property type="evidence" value="ECO:0000315"/>
    <property type="project" value="ZFIN"/>
</dbReference>
<dbReference type="GO" id="GO:0098662">
    <property type="term" value="P:inorganic cation transmembrane transport"/>
    <property type="evidence" value="ECO:0000250"/>
    <property type="project" value="UniProtKB"/>
</dbReference>
<dbReference type="GO" id="GO:0001822">
    <property type="term" value="P:kidney development"/>
    <property type="evidence" value="ECO:0000315"/>
    <property type="project" value="ZFIN"/>
</dbReference>
<dbReference type="GO" id="GO:0070121">
    <property type="term" value="P:Kupffer's vesicle development"/>
    <property type="evidence" value="ECO:0000315"/>
    <property type="project" value="ZFIN"/>
</dbReference>
<dbReference type="GO" id="GO:0060972">
    <property type="term" value="P:left/right pattern formation"/>
    <property type="evidence" value="ECO:0000315"/>
    <property type="project" value="ZFIN"/>
</dbReference>
<dbReference type="GO" id="GO:0001946">
    <property type="term" value="P:lymphangiogenesis"/>
    <property type="evidence" value="ECO:0000315"/>
    <property type="project" value="ZFIN"/>
</dbReference>
<dbReference type="GO" id="GO:0007219">
    <property type="term" value="P:Notch signaling pathway"/>
    <property type="evidence" value="ECO:0000315"/>
    <property type="project" value="ZFIN"/>
</dbReference>
<dbReference type="GO" id="GO:0051284">
    <property type="term" value="P:positive regulation of sequestering of calcium ion"/>
    <property type="evidence" value="ECO:0000315"/>
    <property type="project" value="CACAO"/>
</dbReference>
<dbReference type="GO" id="GO:0071805">
    <property type="term" value="P:potassium ion transmembrane transport"/>
    <property type="evidence" value="ECO:0000250"/>
    <property type="project" value="UniProtKB"/>
</dbReference>
<dbReference type="GO" id="GO:0048793">
    <property type="term" value="P:pronephros development"/>
    <property type="evidence" value="ECO:0000315"/>
    <property type="project" value="ZFIN"/>
</dbReference>
<dbReference type="GO" id="GO:0072114">
    <property type="term" value="P:pronephros morphogenesis"/>
    <property type="evidence" value="ECO:0000315"/>
    <property type="project" value="ZFIN"/>
</dbReference>
<dbReference type="GO" id="GO:0051290">
    <property type="term" value="P:protein heterotetramerization"/>
    <property type="evidence" value="ECO:0000250"/>
    <property type="project" value="UniProtKB"/>
</dbReference>
<dbReference type="GO" id="GO:0051262">
    <property type="term" value="P:protein tetramerization"/>
    <property type="evidence" value="ECO:0000250"/>
    <property type="project" value="UniProtKB"/>
</dbReference>
<dbReference type="GO" id="GO:0065003">
    <property type="term" value="P:protein-containing complex assembly"/>
    <property type="evidence" value="ECO:0000353"/>
    <property type="project" value="ZFIN"/>
</dbReference>
<dbReference type="GO" id="GO:0072019">
    <property type="term" value="P:proximal convoluted tubule development"/>
    <property type="evidence" value="ECO:0000315"/>
    <property type="project" value="ZFIN"/>
</dbReference>
<dbReference type="GO" id="GO:0010882">
    <property type="term" value="P:regulation of cardiac muscle contraction by calcium ion signaling"/>
    <property type="evidence" value="ECO:0000315"/>
    <property type="project" value="ZFIN"/>
</dbReference>
<dbReference type="GO" id="GO:0032965">
    <property type="term" value="P:regulation of collagen biosynthetic process"/>
    <property type="evidence" value="ECO:0000315"/>
    <property type="project" value="ZFIN"/>
</dbReference>
<dbReference type="GO" id="GO:0051209">
    <property type="term" value="P:release of sequestered calcium ion into cytosol"/>
    <property type="evidence" value="ECO:0000318"/>
    <property type="project" value="GO_Central"/>
</dbReference>
<dbReference type="GO" id="GO:0003173">
    <property type="term" value="P:ventriculo bulbo valve development"/>
    <property type="evidence" value="ECO:0000315"/>
    <property type="project" value="ZFIN"/>
</dbReference>
<dbReference type="FunFam" id="1.20.120.350:FF:000080">
    <property type="entry name" value="Polycystic kidney disease 2"/>
    <property type="match status" value="1"/>
</dbReference>
<dbReference type="FunFam" id="1.10.287.70:FF:000055">
    <property type="entry name" value="Polycystic kidney disease 2-like 1"/>
    <property type="match status" value="1"/>
</dbReference>
<dbReference type="FunFam" id="1.10.238.10:FF:000228">
    <property type="entry name" value="polycystin-2 isoform X1"/>
    <property type="match status" value="1"/>
</dbReference>
<dbReference type="FunFam" id="1.20.5.340:FF:000020">
    <property type="entry name" value="polycystin-2 isoform X1"/>
    <property type="match status" value="1"/>
</dbReference>
<dbReference type="Gene3D" id="1.10.287.70">
    <property type="match status" value="1"/>
</dbReference>
<dbReference type="Gene3D" id="1.20.5.340">
    <property type="match status" value="1"/>
</dbReference>
<dbReference type="Gene3D" id="1.10.238.10">
    <property type="entry name" value="EF-hand"/>
    <property type="match status" value="1"/>
</dbReference>
<dbReference type="InterPro" id="IPR011992">
    <property type="entry name" value="EF-hand-dom_pair"/>
</dbReference>
<dbReference type="InterPro" id="IPR002048">
    <property type="entry name" value="EF_hand_dom"/>
</dbReference>
<dbReference type="InterPro" id="IPR013122">
    <property type="entry name" value="PKD1_2_channel"/>
</dbReference>
<dbReference type="InterPro" id="IPR003915">
    <property type="entry name" value="PKD_2"/>
</dbReference>
<dbReference type="InterPro" id="IPR051223">
    <property type="entry name" value="Polycystin"/>
</dbReference>
<dbReference type="InterPro" id="IPR046791">
    <property type="entry name" value="Polycystin_dom"/>
</dbReference>
<dbReference type="PANTHER" id="PTHR10877">
    <property type="entry name" value="POLYCYSTIN FAMILY MEMBER"/>
    <property type="match status" value="1"/>
</dbReference>
<dbReference type="PANTHER" id="PTHR10877:SF114">
    <property type="entry name" value="POLYCYSTIN-2"/>
    <property type="match status" value="1"/>
</dbReference>
<dbReference type="Pfam" id="PF18109">
    <property type="entry name" value="Fer4_24"/>
    <property type="match status" value="1"/>
</dbReference>
<dbReference type="Pfam" id="PF08016">
    <property type="entry name" value="PKD_channel"/>
    <property type="match status" value="1"/>
</dbReference>
<dbReference type="Pfam" id="PF20519">
    <property type="entry name" value="Polycystin_dom"/>
    <property type="match status" value="1"/>
</dbReference>
<dbReference type="PRINTS" id="PR01433">
    <property type="entry name" value="POLYCYSTIN2"/>
</dbReference>
<dbReference type="SUPFAM" id="SSF47473">
    <property type="entry name" value="EF-hand"/>
    <property type="match status" value="1"/>
</dbReference>
<dbReference type="SUPFAM" id="SSF81324">
    <property type="entry name" value="Voltage-gated potassium channels"/>
    <property type="match status" value="1"/>
</dbReference>
<dbReference type="PROSITE" id="PS50222">
    <property type="entry name" value="EF_HAND_2"/>
    <property type="match status" value="2"/>
</dbReference>
<proteinExistence type="evidence at protein level"/>
<comment type="function">
    <text evidence="2 3 13 19">Forms a nonselective cation channel. Can function as a homotetrameric ion channel or can form heteromer with PKD1. Displays distinct function depending on its subcellular localization and regulation by its binding partners. In the primary cilium functions as a cation channel, with a preference for monovalent cations over divalent cations that allows K(+), Na(+) and Ca(2+) influx, with low selectivity for Ca(2+) (By similarity). In the endoplasmic reticulum, likely functions as a K(+) channel to facilitate Ca(2+) release (Probable). Required for normal oscillation of Ca(2+) levels within cilia; these oscillations of the intraciliary Ca(2+) levels can trigger cytoplasmic Ca(2+) signaling cascades (PubMed:25660539). Required for normal temporal variation of the intracellular Ca(2+) levels in the heart (PubMed:23376035). Plays a role in fluid-flow mechanosensation (By similarity). Required for normal specification of the body left-right axis during embryogenesis, most likely via its role in ciliary Ca(2+) oscillations in Kupffer's vesicle (By similarity) (PubMed:15269167, PubMed:16216239, PubMed:16943304, PubMed:17360770, PubMed:23376035, PubMed:25660539).</text>
</comment>
<comment type="catalytic activity">
    <reaction evidence="2">
        <text>K(+)(in) = K(+)(out)</text>
        <dbReference type="Rhea" id="RHEA:29463"/>
        <dbReference type="ChEBI" id="CHEBI:29103"/>
    </reaction>
</comment>
<comment type="catalytic activity">
    <reaction evidence="2">
        <text>Na(+)(in) = Na(+)(out)</text>
        <dbReference type="Rhea" id="RHEA:34963"/>
        <dbReference type="ChEBI" id="CHEBI:29101"/>
    </reaction>
</comment>
<comment type="catalytic activity">
    <reaction evidence="2">
        <text>Ca(2+)(in) = Ca(2+)(out)</text>
        <dbReference type="Rhea" id="RHEA:29671"/>
        <dbReference type="ChEBI" id="CHEBI:29108"/>
    </reaction>
</comment>
<comment type="activity regulation">
    <text evidence="3">Channel activity is regulated by phosphorylation. Channel activity is regulated by intracellular Ca(2+).</text>
</comment>
<comment type="subunit">
    <text evidence="1 3">Homotetramer (By similarity). Component of the heterotetrameric polycystin channel complex with pkd1; the tetramer contains one pkd1 chain and three pkd2 chains (By similarity). Interacts with pkd1l1 (By similarity).</text>
</comment>
<comment type="subcellular location">
    <subcellularLocation>
        <location evidence="10">Basolateral cell membrane</location>
        <topology evidence="3">Multi-pass membrane protein</topology>
    </subcellularLocation>
    <subcellularLocation>
        <location evidence="10">Cell membrane</location>
        <location evidence="10">Sarcolemma</location>
    </subcellularLocation>
    <subcellularLocation>
        <location evidence="10">Cytoplasm</location>
        <location evidence="10">Myofibril</location>
        <location evidence="10">Sarcomere</location>
    </subcellularLocation>
    <subcellularLocation>
        <location evidence="12">Sarcoplasmic reticulum membrane</location>
    </subcellularLocation>
    <subcellularLocation>
        <location evidence="10">Apical cell membrane</location>
        <topology evidence="3">Multi-pass membrane protein</topology>
    </subcellularLocation>
    <subcellularLocation>
        <location evidence="18">Endoplasmic reticulum membrane</location>
        <topology evidence="3">Multi-pass membrane protein</topology>
    </subcellularLocation>
    <subcellularLocation>
        <location evidence="10 14">Cell projection</location>
        <location evidence="10 14">Cilium</location>
    </subcellularLocation>
    <subcellularLocation>
        <location evidence="14">Cytoplasm</location>
        <location evidence="14">Cytoskeleton</location>
        <location evidence="14">Cilium basal body</location>
    </subcellularLocation>
    <subcellularLocation>
        <location evidence="10">Cytoplasmic vesicle membrane</location>
    </subcellularLocation>
    <text evidence="10">Detected at the basolateral cell membrane and on apical, lumenal cilia in anterior, proximal pronephric ducts, and in intracellular vesicles in the posterior part of the pronephric duct. Detected on apical cell membranes on epithelial cells in the ear.</text>
</comment>
<comment type="tissue specificity">
    <text evidence="10 14">Detected along cilia and at the cilium basal body in Kupffer's vesicle at the 10 somite stage (PubMed:26432887). Detected in heart at 48hpf (PubMed:23376035). Detected in muscle and pronephric kidney at 48 hpf (PubMed:16943304). Detected on trunk muscle sarcolemma and sarcomere, on ependymal cell cilia in brain, at the apical cell membrane in epithelial cells in the ear, at the lateral line organ and olfactory placode at 56 hpf (PubMed:16943304). Detected in adult kidney (at protein level) (PubMed:16943304).</text>
</comment>
<comment type="developmental stage">
    <text evidence="8 10 11 14">First detected at the onset of gastrulation in a band at the blastoderm margin (PubMed:16216239, PubMed:17360770). Ubiquitous during gastrulation, somatogenesis and at 48 hpf (PubMed:16943304). During gastrulation, detected at the hypoblast of the dorsal midline and in dorsal forerunner cells that form a ciliated Kupffer's vesicle later on (PubMed:16216239, PubMed:17360770, PubMed:26432887). Ubiquitous during early somite stages, with high levels of expression in Kupffer's vesicle (PubMed:16216239, PubMed:17360770). At subsequent stages, detected in pronephric duct primordia and neural floorplate (PubMed:16216239, PubMed:16943304, PubMed:17360770, PubMed:26432887). Highly expressed in brain at 24 hpf (PubMed:16216239). At 3 dpf, detected at pharyngeal arches and the pectoral fin bud (PubMed:16216239).</text>
</comment>
<comment type="PTM">
    <text evidence="9">Phosphorylated. Phosphorylation is important for protein function; a mutant human construct that lacks the N-terminal phosphorylation sites cannot complement a zebrafish pkd2-deficient mutant.</text>
</comment>
<comment type="PTM">
    <text evidence="3">N-glycosylated. The four subunits in a tetramer probably differ in the extent of glycosylation; simultaneous glycosylation of all experimentally validated sites would probably create steric hindrance.</text>
</comment>
<comment type="PTM">
    <text evidence="2">Sumoylated by SUMO1; sumoylation regulates PKD2 membrane recycling.</text>
</comment>
<comment type="disruption phenotype">
    <text evidence="7 8 9 10 11 12 14">Morpholino knockdown of the protein impairs specification of the left-right axis during embryonic development and randomization of heart and gut looping, plus misexpression of left-side specific genes (PubMed:16216239, PubMed:16943304, PubMed:17360770, PubMed:25660539, PubMed:26432887). Morpholino knockdown of the protein causes body curvature, tail curling, hydrocephalus and kidney cysts (PubMed:15269167, PubMed:16216239, PubMed:16551655, PubMed:16943304, PubMed:17360770, PubMed:23376035, PubMed:26432887). Morpholino knockdown has no effect on number, length or motility of pronephric cilia, but the fluid flow through the pronephric ducts seems to be impaired due to physical obstruction of the ducts (PubMed:16943304). Likewise, morpholino knockdown of the protein has no effect on the motility of cilia in Kupffer's vesicle (PubMed:25660539). Morpholino knockdown of the protein leads to an increase of the volume of Kupffer's vesicle, without any change in the proliferation of the cells that line the vesicle (PubMed:26432887). Morpholino knockdown of the protein leads to impaired heart function, characterized by arrhytmia and frequently associated with pericardial and abdominal edema and atrioventricular block (PubMed:23376035).</text>
</comment>
<comment type="similarity">
    <text evidence="17">Belongs to the polycystin family.</text>
</comment>
<gene>
    <name evidence="23" type="primary">pkd2</name>
</gene>
<reference evidence="20" key="1">
    <citation type="journal article" date="2004" name="Development">
        <title>A genetic screen in zebrafish identifies cilia genes as a principal cause of cystic kidney.</title>
        <authorList>
            <person name="Sun Z."/>
            <person name="Amsterdam A."/>
            <person name="Pazour G.J."/>
            <person name="Cole D.G."/>
            <person name="Miller M.S."/>
            <person name="Hopkins N."/>
        </authorList>
    </citation>
    <scope>NUCLEOTIDE SEQUENCE [MRNA]</scope>
    <scope>FUNCTION</scope>
    <scope>DISRUPTION PHENOTYPE</scope>
</reference>
<reference evidence="21" key="2">
    <citation type="journal article" date="2005" name="Dev. Biol.">
        <title>Polaris and polycystin-2 in dorsal forerunner cells and Kupffer's vesicle are required for specification of the zebrafish left-right axis.</title>
        <authorList>
            <person name="Bisgrove B.W."/>
            <person name="Snarr B.S."/>
            <person name="Emrazian A."/>
            <person name="Yost H.J."/>
        </authorList>
    </citation>
    <scope>NUCLEOTIDE SEQUENCE [MRNA]</scope>
    <scope>FUNCTION</scope>
    <scope>DISRUPTION PHENOTYPE</scope>
    <scope>DEVELOPMENTAL STAGE</scope>
</reference>
<reference evidence="22" key="3">
    <citation type="journal article" date="2013" name="Nature">
        <title>The zebrafish reference genome sequence and its relationship to the human genome.</title>
        <authorList>
            <person name="Howe K."/>
            <person name="Clark M.D."/>
            <person name="Torroja C.F."/>
            <person name="Torrance J."/>
            <person name="Berthelot C."/>
            <person name="Muffato M."/>
            <person name="Collins J.E."/>
            <person name="Humphray S."/>
            <person name="McLaren K."/>
            <person name="Matthews L."/>
            <person name="McLaren S."/>
            <person name="Sealy I."/>
            <person name="Caccamo M."/>
            <person name="Churcher C."/>
            <person name="Scott C."/>
            <person name="Barrett J.C."/>
            <person name="Koch R."/>
            <person name="Rauch G.J."/>
            <person name="White S."/>
            <person name="Chow W."/>
            <person name="Kilian B."/>
            <person name="Quintais L.T."/>
            <person name="Guerra-Assuncao J.A."/>
            <person name="Zhou Y."/>
            <person name="Gu Y."/>
            <person name="Yen J."/>
            <person name="Vogel J.H."/>
            <person name="Eyre T."/>
            <person name="Redmond S."/>
            <person name="Banerjee R."/>
            <person name="Chi J."/>
            <person name="Fu B."/>
            <person name="Langley E."/>
            <person name="Maguire S.F."/>
            <person name="Laird G.K."/>
            <person name="Lloyd D."/>
            <person name="Kenyon E."/>
            <person name="Donaldson S."/>
            <person name="Sehra H."/>
            <person name="Almeida-King J."/>
            <person name="Loveland J."/>
            <person name="Trevanion S."/>
            <person name="Jones M."/>
            <person name="Quail M."/>
            <person name="Willey D."/>
            <person name="Hunt A."/>
            <person name="Burton J."/>
            <person name="Sims S."/>
            <person name="McLay K."/>
            <person name="Plumb B."/>
            <person name="Davis J."/>
            <person name="Clee C."/>
            <person name="Oliver K."/>
            <person name="Clark R."/>
            <person name="Riddle C."/>
            <person name="Elliot D."/>
            <person name="Threadgold G."/>
            <person name="Harden G."/>
            <person name="Ware D."/>
            <person name="Begum S."/>
            <person name="Mortimore B."/>
            <person name="Kerry G."/>
            <person name="Heath P."/>
            <person name="Phillimore B."/>
            <person name="Tracey A."/>
            <person name="Corby N."/>
            <person name="Dunn M."/>
            <person name="Johnson C."/>
            <person name="Wood J."/>
            <person name="Clark S."/>
            <person name="Pelan S."/>
            <person name="Griffiths G."/>
            <person name="Smith M."/>
            <person name="Glithero R."/>
            <person name="Howden P."/>
            <person name="Barker N."/>
            <person name="Lloyd C."/>
            <person name="Stevens C."/>
            <person name="Harley J."/>
            <person name="Holt K."/>
            <person name="Panagiotidis G."/>
            <person name="Lovell J."/>
            <person name="Beasley H."/>
            <person name="Henderson C."/>
            <person name="Gordon D."/>
            <person name="Auger K."/>
            <person name="Wright D."/>
            <person name="Collins J."/>
            <person name="Raisen C."/>
            <person name="Dyer L."/>
            <person name="Leung K."/>
            <person name="Robertson L."/>
            <person name="Ambridge K."/>
            <person name="Leongamornlert D."/>
            <person name="McGuire S."/>
            <person name="Gilderthorp R."/>
            <person name="Griffiths C."/>
            <person name="Manthravadi D."/>
            <person name="Nichol S."/>
            <person name="Barker G."/>
            <person name="Whitehead S."/>
            <person name="Kay M."/>
            <person name="Brown J."/>
            <person name="Murnane C."/>
            <person name="Gray E."/>
            <person name="Humphries M."/>
            <person name="Sycamore N."/>
            <person name="Barker D."/>
            <person name="Saunders D."/>
            <person name="Wallis J."/>
            <person name="Babbage A."/>
            <person name="Hammond S."/>
            <person name="Mashreghi-Mohammadi M."/>
            <person name="Barr L."/>
            <person name="Martin S."/>
            <person name="Wray P."/>
            <person name="Ellington A."/>
            <person name="Matthews N."/>
            <person name="Ellwood M."/>
            <person name="Woodmansey R."/>
            <person name="Clark G."/>
            <person name="Cooper J."/>
            <person name="Tromans A."/>
            <person name="Grafham D."/>
            <person name="Skuce C."/>
            <person name="Pandian R."/>
            <person name="Andrews R."/>
            <person name="Harrison E."/>
            <person name="Kimberley A."/>
            <person name="Garnett J."/>
            <person name="Fosker N."/>
            <person name="Hall R."/>
            <person name="Garner P."/>
            <person name="Kelly D."/>
            <person name="Bird C."/>
            <person name="Palmer S."/>
            <person name="Gehring I."/>
            <person name="Berger A."/>
            <person name="Dooley C.M."/>
            <person name="Ersan-Urun Z."/>
            <person name="Eser C."/>
            <person name="Geiger H."/>
            <person name="Geisler M."/>
            <person name="Karotki L."/>
            <person name="Kirn A."/>
            <person name="Konantz J."/>
            <person name="Konantz M."/>
            <person name="Oberlander M."/>
            <person name="Rudolph-Geiger S."/>
            <person name="Teucke M."/>
            <person name="Lanz C."/>
            <person name="Raddatz G."/>
            <person name="Osoegawa K."/>
            <person name="Zhu B."/>
            <person name="Rapp A."/>
            <person name="Widaa S."/>
            <person name="Langford C."/>
            <person name="Yang F."/>
            <person name="Schuster S.C."/>
            <person name="Carter N.P."/>
            <person name="Harrow J."/>
            <person name="Ning Z."/>
            <person name="Herrero J."/>
            <person name="Searle S.M."/>
            <person name="Enright A."/>
            <person name="Geisler R."/>
            <person name="Plasterk R.H."/>
            <person name="Lee C."/>
            <person name="Westerfield M."/>
            <person name="de Jong P.J."/>
            <person name="Zon L.I."/>
            <person name="Postlethwait J.H."/>
            <person name="Nusslein-Volhard C."/>
            <person name="Hubbard T.J."/>
            <person name="Roest Crollius H."/>
            <person name="Rogers J."/>
            <person name="Stemple D.L."/>
        </authorList>
    </citation>
    <scope>NUCLEOTIDE SEQUENCE [LARGE SCALE GENOMIC DNA]</scope>
    <source>
        <strain evidence="22">Tuebingen</strain>
    </source>
</reference>
<reference key="4">
    <citation type="journal article" date="2006" name="J. Am. Soc. Nephrol.">
        <title>Polycystin-2 immunolocalization and function in zebrafish.</title>
        <authorList>
            <person name="Obara T."/>
            <person name="Mangos S."/>
            <person name="Liu Y."/>
            <person name="Zhao J."/>
            <person name="Wiessner S."/>
            <person name="Kramer-Zucker A.G."/>
            <person name="Olale F."/>
            <person name="Schier A.F."/>
            <person name="Drummond I.A."/>
        </authorList>
    </citation>
    <scope>DISRUPTION PHENOTYPE</scope>
    <scope>FUNCTION</scope>
    <scope>TISSUE SPECIFICITY</scope>
    <scope>SUBCELLULAR LOCATION</scope>
    <scope>DEVELOPMENTAL STAGE</scope>
</reference>
<reference key="5">
    <citation type="journal article" date="2006" name="Hum. Mol. Genet.">
        <title>Identification of an N-terminal glycogen synthase kinase 3 phosphorylation site which regulates the functional localization of polycystin-2 in vivo and in vitro.</title>
        <authorList>
            <person name="Streets A.J."/>
            <person name="Moon D.J."/>
            <person name="Kane M.E."/>
            <person name="Obara T."/>
            <person name="Ong A.C."/>
        </authorList>
    </citation>
    <scope>DISRUPTION PHENOTYPE</scope>
    <scope>PHOSPHORYLATION</scope>
</reference>
<reference key="6">
    <citation type="journal article" date="2007" name="Development">
        <title>Zebrafish curly up encodes a Pkd2 ortholog that restricts left-side-specific expression of southpaw.</title>
        <authorList>
            <person name="Schottenfeld J."/>
            <person name="Sullivan-Brown J."/>
            <person name="Burdine R.D."/>
        </authorList>
    </citation>
    <scope>FUNCTION</scope>
    <scope>DISRUPTION PHENOTYPE</scope>
    <scope>DEVELOPMENTAL STAGE</scope>
    <scope>MUTAGENESIS OF LEU-351</scope>
</reference>
<reference key="7">
    <citation type="journal article" date="2013" name="J. Mol. Cell. Cardiol.">
        <title>Polycystin-2 mutations lead to impaired calcium cycling in the heart and predispose to dilated cardiomyopathy.</title>
        <authorList>
            <person name="Paavola J."/>
            <person name="Schliffke S."/>
            <person name="Rossetti S."/>
            <person name="Kuo I.Y."/>
            <person name="Yuan S."/>
            <person name="Sun Z."/>
            <person name="Harris P.C."/>
            <person name="Torres V.E."/>
            <person name="Ehrlich B.E."/>
        </authorList>
    </citation>
    <scope>DISRUPTION PHENOTYPE</scope>
    <scope>FUNCTION</scope>
    <scope>TISSUE SPECIFICITY</scope>
    <scope>SUBCELLULAR LOCATION</scope>
</reference>
<reference key="8">
    <citation type="journal article" date="2015" name="Biol. Open">
        <title>The zebrafish Kupffer's vesicle as a model system for the molecular mechanisms by which the lack of Polycystin-2 leads to stimulation of CFTR.</title>
        <authorList>
            <person name="Roxo-Rosa M."/>
            <person name="Jacinto R."/>
            <person name="Sampaio P."/>
            <person name="Lopes S.S."/>
        </authorList>
    </citation>
    <scope>DISRUPTION PHENOTYPE</scope>
    <scope>DEVELOPMENTAL STAGE</scope>
    <scope>TISSUE SPECIFICITY</scope>
    <scope>SUBCELLULAR LOCATION</scope>
</reference>
<reference key="9">
    <citation type="journal article" date="2015" name="Curr. Biol.">
        <title>Intraciliary calcium oscillations initiate vertebrate left-right asymmetry.</title>
        <authorList>
            <person name="Yuan S."/>
            <person name="Zhao L."/>
            <person name="Brueckner M."/>
            <person name="Sun Z."/>
        </authorList>
    </citation>
    <scope>FUNCTION</scope>
    <scope>DISRUPTION PHENOTYPE</scope>
</reference>
<reference key="10">
    <citation type="journal article" date="2022" name="J. Am. Soc. Nephrol.">
        <title>Channel Function of Polycystin-2 in the Endoplasmic Reticulum Protects against Autosomal Dominant Polycystic Kidney Disease.</title>
        <authorList>
            <person name="Padhy B."/>
            <person name="Xie J."/>
            <person name="Wang R."/>
            <person name="Lin F."/>
            <person name="Huang C.L."/>
        </authorList>
    </citation>
    <scope>FUNCTION</scope>
</reference>
<accession>Q6IVV8</accession>
<accession>Q2VF27</accession>
<evidence type="ECO:0000250" key="1">
    <source>
        <dbReference type="UniProtKB" id="H2LRU7"/>
    </source>
</evidence>
<evidence type="ECO:0000250" key="2">
    <source>
        <dbReference type="UniProtKB" id="O35245"/>
    </source>
</evidence>
<evidence type="ECO:0000250" key="3">
    <source>
        <dbReference type="UniProtKB" id="Q13563"/>
    </source>
</evidence>
<evidence type="ECO:0000255" key="4">
    <source>
        <dbReference type="PROSITE-ProRule" id="PRU00448"/>
    </source>
</evidence>
<evidence type="ECO:0000255" key="5">
    <source>
        <dbReference type="PROSITE-ProRule" id="PRU00498"/>
    </source>
</evidence>
<evidence type="ECO:0000256" key="6">
    <source>
        <dbReference type="SAM" id="MobiDB-lite"/>
    </source>
</evidence>
<evidence type="ECO:0000269" key="7">
    <source>
    </source>
</evidence>
<evidence type="ECO:0000269" key="8">
    <source>
    </source>
</evidence>
<evidence type="ECO:0000269" key="9">
    <source>
    </source>
</evidence>
<evidence type="ECO:0000269" key="10">
    <source>
    </source>
</evidence>
<evidence type="ECO:0000269" key="11">
    <source>
    </source>
</evidence>
<evidence type="ECO:0000269" key="12">
    <source>
    </source>
</evidence>
<evidence type="ECO:0000269" key="13">
    <source>
    </source>
</evidence>
<evidence type="ECO:0000269" key="14">
    <source>
    </source>
</evidence>
<evidence type="ECO:0000303" key="15">
    <source>
    </source>
</evidence>
<evidence type="ECO:0000303" key="16">
    <source>
    </source>
</evidence>
<evidence type="ECO:0000305" key="17"/>
<evidence type="ECO:0000305" key="18">
    <source>
    </source>
</evidence>
<evidence type="ECO:0000305" key="19">
    <source>
    </source>
</evidence>
<evidence type="ECO:0000312" key="20">
    <source>
        <dbReference type="EMBL" id="AAT39122.1"/>
    </source>
</evidence>
<evidence type="ECO:0000312" key="21">
    <source>
        <dbReference type="EMBL" id="ABA60692.1"/>
    </source>
</evidence>
<evidence type="ECO:0000312" key="22">
    <source>
        <dbReference type="Proteomes" id="UP000000437"/>
    </source>
</evidence>
<evidence type="ECO:0000312" key="23">
    <source>
        <dbReference type="ZFIN" id="ZDB-GENE-040827-4"/>
    </source>
</evidence>
<name>PKD2_DANRE</name>
<keyword id="KW-0106">Calcium</keyword>
<keyword id="KW-0107">Calcium channel</keyword>
<keyword id="KW-0109">Calcium transport</keyword>
<keyword id="KW-1003">Cell membrane</keyword>
<keyword id="KW-0966">Cell projection</keyword>
<keyword id="KW-0969">Cilium</keyword>
<keyword id="KW-0175">Coiled coil</keyword>
<keyword id="KW-0963">Cytoplasm</keyword>
<keyword id="KW-0968">Cytoplasmic vesicle</keyword>
<keyword id="KW-0206">Cytoskeleton</keyword>
<keyword id="KW-1015">Disulfide bond</keyword>
<keyword id="KW-0256">Endoplasmic reticulum</keyword>
<keyword id="KW-0325">Glycoprotein</keyword>
<keyword id="KW-0407">Ion channel</keyword>
<keyword id="KW-0406">Ion transport</keyword>
<keyword id="KW-0472">Membrane</keyword>
<keyword id="KW-0479">Metal-binding</keyword>
<keyword id="KW-0597">Phosphoprotein</keyword>
<keyword id="KW-0630">Potassium</keyword>
<keyword id="KW-0631">Potassium channel</keyword>
<keyword id="KW-0633">Potassium transport</keyword>
<keyword id="KW-1185">Reference proteome</keyword>
<keyword id="KW-0677">Repeat</keyword>
<keyword id="KW-0703">Sarcoplasmic reticulum</keyword>
<keyword id="KW-0812">Transmembrane</keyword>
<keyword id="KW-1133">Transmembrane helix</keyword>
<keyword id="KW-0813">Transport</keyword>
<keyword id="KW-0832">Ubl conjugation</keyword>
<keyword id="KW-0851">Voltage-gated channel</keyword>
<sequence>MSSSRVRPQAPQSPAASASASPPPHEGIEMEKMHHEEVGLGVPDETPSSPPTSSSRQAWSRDNPGFEPEEGMMEADWPPESQGRRSVSTTSSSSSGGVPGNFSGISARINRGLYPTPPAQEHRSCGKRILEKMRVLWDTRLLGESNSNREMYLKTVLREMITYILFLLTLCIITYGMVSTNMYYYTKVMSQLFLDTPLSSGEPTNFKSLSTMEDFWKFTEGPFLNGMYWELWYNNKSLPENQSLIYYENLLLGVPRLRQLRVRNESCSVHEDLRDEVYDCYNVYSPANEDKAPFGPKNGTAWRFKDESSLGESSYWGQVSTYGGGGYYQDLSRTREKSANQLQELKNNLWLDRGTRAVFLDFSIYNGNVNLFCIVRLLVEFPATGGAVPSWQFQTVRLLRYVSSWDYFVGMCEVSFCLFVLYYLVEEALEIRLHRLRYFKSLWNCLDVLIVALSVPAIIMNICRTSAVSHRLHFLLENHSTYPNFEPLARLQVHFNNLAAIIVFLSWVKLFKFINFNKTMNQLSTTMSRCAKDLMGFAIMFFIVFLAYAQLAYLVFGTQVNDFSTFQACIFTQFRIILGDFDFSEIEEADSVLGPIYFTTFVFFIFMILLNMFLAIINDTYSEVKADMAQQRSEMEITDLIKKSYNRAMVKLKLKKSSINDIPDSLQQAAGKLSFDELRQDLRGKGHSDAEIEAIFAKYDLDGDQELTEHEHQQMRDDLEKEREDLDLEHSSLPRPASGRSFSRSQDDSEEDDDEDSGHSSRRRGSSSGGVSYEEFQVLVRRVDRMEHSIGSIVSKIDAVIVKLEAMERAKMKRRDVLGRILDGVMEDERMGRDPELQREQMDRLVRDELERWESDDTMSQVSHHHHQATPIISSAQLRPRSSRPPSSLSNEGPDAAASGPAHL</sequence>
<protein>
    <recommendedName>
        <fullName evidence="15">Polycystin-2</fullName>
    </recommendedName>
    <alternativeName>
        <fullName evidence="16">Curly up</fullName>
        <shortName evidence="16">Cup</shortName>
    </alternativeName>
    <alternativeName>
        <fullName>Polycystic kidney disease 2 protein homolog</fullName>
    </alternativeName>
    <alternativeName>
        <fullName>Transient receptor potential cation channel subfamily P member 2</fullName>
    </alternativeName>
</protein>
<feature type="chain" id="PRO_0000439854" description="Polycystin-2">
    <location>
        <begin position="1"/>
        <end position="904"/>
    </location>
</feature>
<feature type="topological domain" description="Cytoplasmic" evidence="3">
    <location>
        <begin position="1"/>
        <end position="155"/>
    </location>
</feature>
<feature type="transmembrane region" description="Helical; Name=S1" evidence="3">
    <location>
        <begin position="156"/>
        <end position="177"/>
    </location>
</feature>
<feature type="topological domain" description="Extracellular" evidence="3">
    <location>
        <begin position="178"/>
        <end position="404"/>
    </location>
</feature>
<feature type="transmembrane region" description="Helical; Name=S2" evidence="3">
    <location>
        <begin position="405"/>
        <end position="425"/>
    </location>
</feature>
<feature type="topological domain" description="Cytoplasmic" evidence="3">
    <location>
        <begin position="426"/>
        <end position="441"/>
    </location>
</feature>
<feature type="transmembrane region" description="Helical; Name=S3" evidence="3">
    <location>
        <begin position="442"/>
        <end position="462"/>
    </location>
</feature>
<feature type="topological domain" description="Extracellular" evidence="3">
    <location>
        <begin position="463"/>
        <end position="489"/>
    </location>
</feature>
<feature type="transmembrane region" description="Helical; Name=S4" evidence="3">
    <location>
        <begin position="490"/>
        <end position="510"/>
    </location>
</feature>
<feature type="topological domain" description="Cytoplasmic" evidence="3">
    <location>
        <begin position="511"/>
        <end position="534"/>
    </location>
</feature>
<feature type="transmembrane region" description="Helical; Name=5" evidence="3">
    <location>
        <begin position="535"/>
        <end position="556"/>
    </location>
</feature>
<feature type="topological domain" description="Extracellular" evidence="3">
    <location>
        <begin position="557"/>
        <end position="568"/>
    </location>
</feature>
<feature type="intramembrane region" description="Pore-forming" evidence="3">
    <location>
        <begin position="569"/>
        <end position="583"/>
    </location>
</feature>
<feature type="topological domain" description="Extracellular" evidence="3">
    <location>
        <begin position="584"/>
        <end position="591"/>
    </location>
</feature>
<feature type="transmembrane region" description="Helical; Name=S6" evidence="3">
    <location>
        <begin position="592"/>
        <end position="612"/>
    </location>
</feature>
<feature type="topological domain" description="Cytoplasmic" evidence="3">
    <location>
        <begin position="613"/>
        <end position="904"/>
    </location>
</feature>
<feature type="domain" description="EF-hand 1" evidence="4">
    <location>
        <begin position="687"/>
        <end position="722"/>
    </location>
</feature>
<feature type="domain" description="EF-hand 2" evidence="4">
    <location>
        <begin position="768"/>
        <end position="786"/>
    </location>
</feature>
<feature type="region of interest" description="Disordered" evidence="6">
    <location>
        <begin position="1"/>
        <end position="102"/>
    </location>
</feature>
<feature type="region of interest" description="Disordered" evidence="6">
    <location>
        <begin position="708"/>
        <end position="770"/>
    </location>
</feature>
<feature type="region of interest" description="Linker" evidence="3">
    <location>
        <begin position="740"/>
        <end position="759"/>
    </location>
</feature>
<feature type="region of interest" description="Disordered" evidence="6">
    <location>
        <begin position="854"/>
        <end position="904"/>
    </location>
</feature>
<feature type="coiled-coil region" evidence="3">
    <location>
        <begin position="770"/>
        <end position="809"/>
    </location>
</feature>
<feature type="short sequence motif" description="Selectivity filter" evidence="3">
    <location>
        <begin position="578"/>
        <end position="580"/>
    </location>
</feature>
<feature type="compositionally biased region" description="Low complexity" evidence="6">
    <location>
        <begin position="8"/>
        <end position="20"/>
    </location>
</feature>
<feature type="compositionally biased region" description="Basic and acidic residues" evidence="6">
    <location>
        <begin position="26"/>
        <end position="38"/>
    </location>
</feature>
<feature type="compositionally biased region" description="Low complexity" evidence="6">
    <location>
        <begin position="86"/>
        <end position="96"/>
    </location>
</feature>
<feature type="compositionally biased region" description="Basic and acidic residues" evidence="6">
    <location>
        <begin position="708"/>
        <end position="732"/>
    </location>
</feature>
<feature type="compositionally biased region" description="Low complexity" evidence="6">
    <location>
        <begin position="878"/>
        <end position="890"/>
    </location>
</feature>
<feature type="binding site" evidence="3">
    <location>
        <position position="578"/>
    </location>
    <ligand>
        <name>Ca(2+)</name>
        <dbReference type="ChEBI" id="CHEBI:29108"/>
        <label>1</label>
        <note>ligand shared between homotetrameric partners</note>
    </ligand>
</feature>
<feature type="binding site" evidence="3">
    <location>
        <position position="700"/>
    </location>
    <ligand>
        <name>Ca(2+)</name>
        <dbReference type="ChEBI" id="CHEBI:29108"/>
        <label>2</label>
    </ligand>
</feature>
<feature type="binding site" evidence="3">
    <location>
        <position position="702"/>
    </location>
    <ligand>
        <name>Ca(2+)</name>
        <dbReference type="ChEBI" id="CHEBI:29108"/>
        <label>2</label>
    </ligand>
</feature>
<feature type="binding site" evidence="3">
    <location>
        <position position="704"/>
    </location>
    <ligand>
        <name>Ca(2+)</name>
        <dbReference type="ChEBI" id="CHEBI:29108"/>
        <label>2</label>
    </ligand>
</feature>
<feature type="binding site" evidence="3">
    <location>
        <position position="706"/>
    </location>
    <ligand>
        <name>Ca(2+)</name>
        <dbReference type="ChEBI" id="CHEBI:29108"/>
        <label>2</label>
    </ligand>
</feature>
<feature type="binding site" evidence="3">
    <location>
        <position position="711"/>
    </location>
    <ligand>
        <name>Ca(2+)</name>
        <dbReference type="ChEBI" id="CHEBI:29108"/>
        <label>2</label>
    </ligand>
</feature>
<feature type="glycosylation site" description="N-linked (GlcNAc...) asparagine" evidence="5">
    <location>
        <position position="235"/>
    </location>
</feature>
<feature type="glycosylation site" description="N-linked (GlcNAc...) asparagine" evidence="5">
    <location>
        <position position="241"/>
    </location>
</feature>
<feature type="glycosylation site" description="N-linked (GlcNAc...) asparagine" evidence="5">
    <location>
        <position position="264"/>
    </location>
</feature>
<feature type="glycosylation site" description="N-linked (GlcNAc...) asparagine" evidence="5">
    <location>
        <position position="298"/>
    </location>
</feature>
<feature type="glycosylation site" description="N-linked (GlcNAc...) asparagine" evidence="5">
    <location>
        <position position="478"/>
    </location>
</feature>
<feature type="disulfide bond" evidence="3">
    <location>
        <begin position="267"/>
        <end position="280"/>
    </location>
</feature>
<feature type="mutagenesis site" description="In ty30b; curly tail phenotype and impaired left-right patterning." evidence="11">
    <original>L</original>
    <variation>P</variation>
    <location>
        <position position="351"/>
    </location>
</feature>
<feature type="sequence conflict" description="In Ref. 2; ABA60692." evidence="17" ref="2">
    <original>A</original>
    <variation>V</variation>
    <location>
        <position position="15"/>
    </location>
</feature>
<feature type="sequence conflict" description="In Ref. 2; ABA60692." evidence="17" ref="2">
    <original>L</original>
    <variation>P</variation>
    <location>
        <position position="130"/>
    </location>
</feature>
<feature type="sequence conflict" description="In Ref. 2; ABA60692." evidence="17" ref="2">
    <original>G</original>
    <variation>R</variation>
    <location>
        <position position="325"/>
    </location>
</feature>
<feature type="sequence conflict" description="In Ref. 2; ABA60692." evidence="17" ref="2">
    <original>T</original>
    <variation>A</variation>
    <location>
        <position position="334"/>
    </location>
</feature>
<feature type="sequence conflict" description="In Ref. 2; ABA60692." evidence="17" ref="2">
    <original>FIFMI</original>
    <variation>LIFMV</variation>
    <location>
        <begin position="604"/>
        <end position="608"/>
    </location>
</feature>